<evidence type="ECO:0000255" key="1">
    <source>
        <dbReference type="HAMAP-Rule" id="MF_01343"/>
    </source>
</evidence>
<evidence type="ECO:0000305" key="2"/>
<keyword id="KW-0687">Ribonucleoprotein</keyword>
<keyword id="KW-0689">Ribosomal protein</keyword>
<keyword id="KW-0694">RNA-binding</keyword>
<keyword id="KW-0699">rRNA-binding</keyword>
<reference key="1">
    <citation type="journal article" date="2004" name="J. Bacteriol.">
        <title>Comparative genomics of two Leptospira interrogans serovars reveals novel insights into physiology and pathogenesis.</title>
        <authorList>
            <person name="Nascimento A.L.T.O."/>
            <person name="Ko A.I."/>
            <person name="Martins E.A.L."/>
            <person name="Monteiro-Vitorello C.B."/>
            <person name="Ho P.L."/>
            <person name="Haake D.A."/>
            <person name="Verjovski-Almeida S."/>
            <person name="Hartskeerl R.A."/>
            <person name="Marques M.V."/>
            <person name="Oliveira M.C."/>
            <person name="Menck C.F.M."/>
            <person name="Leite L.C.C."/>
            <person name="Carrer H."/>
            <person name="Coutinho L.L."/>
            <person name="Degrave W.M."/>
            <person name="Dellagostin O.A."/>
            <person name="El-Dorry H."/>
            <person name="Ferro E.S."/>
            <person name="Ferro M.I.T."/>
            <person name="Furlan L.R."/>
            <person name="Gamberini M."/>
            <person name="Giglioti E.A."/>
            <person name="Goes-Neto A."/>
            <person name="Goldman G.H."/>
            <person name="Goldman M.H.S."/>
            <person name="Harakava R."/>
            <person name="Jeronimo S.M.B."/>
            <person name="Junqueira-de-Azevedo I.L.M."/>
            <person name="Kimura E.T."/>
            <person name="Kuramae E.E."/>
            <person name="Lemos E.G.M."/>
            <person name="Lemos M.V.F."/>
            <person name="Marino C.L."/>
            <person name="Nunes L.R."/>
            <person name="de Oliveira R.C."/>
            <person name="Pereira G.G."/>
            <person name="Reis M.S."/>
            <person name="Schriefer A."/>
            <person name="Siqueira W.J."/>
            <person name="Sommer P."/>
            <person name="Tsai S.M."/>
            <person name="Simpson A.J.G."/>
            <person name="Ferro J.A."/>
            <person name="Camargo L.E.A."/>
            <person name="Kitajima J.P."/>
            <person name="Setubal J.C."/>
            <person name="Van Sluys M.A."/>
        </authorList>
    </citation>
    <scope>NUCLEOTIDE SEQUENCE [LARGE SCALE GENOMIC DNA]</scope>
    <source>
        <strain>Fiocruz L1-130</strain>
    </source>
</reference>
<protein>
    <recommendedName>
        <fullName evidence="1">Small ribosomal subunit protein uS15</fullName>
    </recommendedName>
    <alternativeName>
        <fullName evidence="2">30S ribosomal protein S15</fullName>
    </alternativeName>
</protein>
<proteinExistence type="inferred from homology"/>
<gene>
    <name evidence="1" type="primary">rpsO</name>
    <name type="ordered locus">LIC_12702</name>
</gene>
<name>RS15_LEPIC</name>
<comment type="function">
    <text evidence="1">One of the primary rRNA binding proteins, it binds directly to 16S rRNA where it helps nucleate assembly of the platform of the 30S subunit by binding and bridging several RNA helices of the 16S rRNA.</text>
</comment>
<comment type="function">
    <text evidence="1">Forms an intersubunit bridge (bridge B4) with the 23S rRNA of the 50S subunit in the ribosome.</text>
</comment>
<comment type="subunit">
    <text evidence="1">Part of the 30S ribosomal subunit. Forms a bridge to the 50S subunit in the 70S ribosome, contacting the 23S rRNA.</text>
</comment>
<comment type="similarity">
    <text evidence="1">Belongs to the universal ribosomal protein uS15 family.</text>
</comment>
<dbReference type="EMBL" id="AE016823">
    <property type="protein sequence ID" value="AAS71260.1"/>
    <property type="molecule type" value="Genomic_DNA"/>
</dbReference>
<dbReference type="RefSeq" id="WP_000562102.1">
    <property type="nucleotide sequence ID" value="NC_005823.1"/>
</dbReference>
<dbReference type="SMR" id="Q72NX6"/>
<dbReference type="GeneID" id="61142582"/>
<dbReference type="KEGG" id="lic:LIC_12702"/>
<dbReference type="HOGENOM" id="CLU_148518_0_0_12"/>
<dbReference type="Proteomes" id="UP000007037">
    <property type="component" value="Chromosome I"/>
</dbReference>
<dbReference type="GO" id="GO:0022627">
    <property type="term" value="C:cytosolic small ribosomal subunit"/>
    <property type="evidence" value="ECO:0007669"/>
    <property type="project" value="TreeGrafter"/>
</dbReference>
<dbReference type="GO" id="GO:0019843">
    <property type="term" value="F:rRNA binding"/>
    <property type="evidence" value="ECO:0007669"/>
    <property type="project" value="UniProtKB-UniRule"/>
</dbReference>
<dbReference type="GO" id="GO:0003735">
    <property type="term" value="F:structural constituent of ribosome"/>
    <property type="evidence" value="ECO:0007669"/>
    <property type="project" value="InterPro"/>
</dbReference>
<dbReference type="GO" id="GO:0006412">
    <property type="term" value="P:translation"/>
    <property type="evidence" value="ECO:0007669"/>
    <property type="project" value="UniProtKB-UniRule"/>
</dbReference>
<dbReference type="CDD" id="cd00353">
    <property type="entry name" value="Ribosomal_S15p_S13e"/>
    <property type="match status" value="1"/>
</dbReference>
<dbReference type="FunFam" id="1.10.287.10:FF:000002">
    <property type="entry name" value="30S ribosomal protein S15"/>
    <property type="match status" value="1"/>
</dbReference>
<dbReference type="Gene3D" id="6.10.250.3130">
    <property type="match status" value="1"/>
</dbReference>
<dbReference type="Gene3D" id="1.10.287.10">
    <property type="entry name" value="S15/NS1, RNA-binding"/>
    <property type="match status" value="1"/>
</dbReference>
<dbReference type="HAMAP" id="MF_01343_B">
    <property type="entry name" value="Ribosomal_uS15_B"/>
    <property type="match status" value="1"/>
</dbReference>
<dbReference type="InterPro" id="IPR000589">
    <property type="entry name" value="Ribosomal_uS15"/>
</dbReference>
<dbReference type="InterPro" id="IPR005290">
    <property type="entry name" value="Ribosomal_uS15_bac-type"/>
</dbReference>
<dbReference type="InterPro" id="IPR009068">
    <property type="entry name" value="uS15_NS1_RNA-bd_sf"/>
</dbReference>
<dbReference type="NCBIfam" id="TIGR00952">
    <property type="entry name" value="S15_bact"/>
    <property type="match status" value="1"/>
</dbReference>
<dbReference type="PANTHER" id="PTHR23321">
    <property type="entry name" value="RIBOSOMAL PROTEIN S15, BACTERIAL AND ORGANELLAR"/>
    <property type="match status" value="1"/>
</dbReference>
<dbReference type="PANTHER" id="PTHR23321:SF26">
    <property type="entry name" value="SMALL RIBOSOMAL SUBUNIT PROTEIN US15M"/>
    <property type="match status" value="1"/>
</dbReference>
<dbReference type="Pfam" id="PF00312">
    <property type="entry name" value="Ribosomal_S15"/>
    <property type="match status" value="1"/>
</dbReference>
<dbReference type="SMART" id="SM01387">
    <property type="entry name" value="Ribosomal_S15"/>
    <property type="match status" value="1"/>
</dbReference>
<dbReference type="SUPFAM" id="SSF47060">
    <property type="entry name" value="S15/NS1 RNA-binding domain"/>
    <property type="match status" value="1"/>
</dbReference>
<dbReference type="PROSITE" id="PS00362">
    <property type="entry name" value="RIBOSOMAL_S15"/>
    <property type="match status" value="1"/>
</dbReference>
<accession>Q72NX6</accession>
<organism>
    <name type="scientific">Leptospira interrogans serogroup Icterohaemorrhagiae serovar copenhageni (strain Fiocruz L1-130)</name>
    <dbReference type="NCBI Taxonomy" id="267671"/>
    <lineage>
        <taxon>Bacteria</taxon>
        <taxon>Pseudomonadati</taxon>
        <taxon>Spirochaetota</taxon>
        <taxon>Spirochaetia</taxon>
        <taxon>Leptospirales</taxon>
        <taxon>Leptospiraceae</taxon>
        <taxon>Leptospira</taxon>
    </lineage>
</organism>
<sequence length="88" mass="10279">MIATEQKKQIISNFARKAGDTGSTEVQIALIDARIKELNEHFKTHKKDFHSKTGLLRLVGKRKKLLDYLKRTELERYKKLIETLGLRK</sequence>
<feature type="chain" id="PRO_0000115463" description="Small ribosomal subunit protein uS15">
    <location>
        <begin position="1"/>
        <end position="88"/>
    </location>
</feature>